<organism>
    <name type="scientific">Schizosaccharomyces pombe (strain 972 / ATCC 24843)</name>
    <name type="common">Fission yeast</name>
    <dbReference type="NCBI Taxonomy" id="284812"/>
    <lineage>
        <taxon>Eukaryota</taxon>
        <taxon>Fungi</taxon>
        <taxon>Dikarya</taxon>
        <taxon>Ascomycota</taxon>
        <taxon>Taphrinomycotina</taxon>
        <taxon>Schizosaccharomycetes</taxon>
        <taxon>Schizosaccharomycetales</taxon>
        <taxon>Schizosaccharomycetaceae</taxon>
        <taxon>Schizosaccharomyces</taxon>
    </lineage>
</organism>
<comment type="function">
    <text evidence="6">Involved in a signal transduction pathway that is activated by changes in the osmolarity of the extracellular environment. Activates the wis1 MAP kinase kinase by phosphorylation.</text>
</comment>
<comment type="catalytic activity">
    <reaction>
        <text>L-seryl-[protein] + ATP = O-phospho-L-seryl-[protein] + ADP + H(+)</text>
        <dbReference type="Rhea" id="RHEA:17989"/>
        <dbReference type="Rhea" id="RHEA-COMP:9863"/>
        <dbReference type="Rhea" id="RHEA-COMP:11604"/>
        <dbReference type="ChEBI" id="CHEBI:15378"/>
        <dbReference type="ChEBI" id="CHEBI:29999"/>
        <dbReference type="ChEBI" id="CHEBI:30616"/>
        <dbReference type="ChEBI" id="CHEBI:83421"/>
        <dbReference type="ChEBI" id="CHEBI:456216"/>
        <dbReference type="EC" id="2.7.11.25"/>
    </reaction>
</comment>
<comment type="catalytic activity">
    <reaction>
        <text>L-threonyl-[protein] + ATP = O-phospho-L-threonyl-[protein] + ADP + H(+)</text>
        <dbReference type="Rhea" id="RHEA:46608"/>
        <dbReference type="Rhea" id="RHEA-COMP:11060"/>
        <dbReference type="Rhea" id="RHEA-COMP:11605"/>
        <dbReference type="ChEBI" id="CHEBI:15378"/>
        <dbReference type="ChEBI" id="CHEBI:30013"/>
        <dbReference type="ChEBI" id="CHEBI:30616"/>
        <dbReference type="ChEBI" id="CHEBI:61977"/>
        <dbReference type="ChEBI" id="CHEBI:456216"/>
        <dbReference type="EC" id="2.7.11.25"/>
    </reaction>
</comment>
<comment type="subunit">
    <text evidence="4">Interacts with tea4.</text>
</comment>
<comment type="interaction">
    <interactant intactId="EBI-1099995">
        <id>O74304</id>
    </interactant>
    <interactant intactId="EBI-1099982">
        <id>O60132</id>
        <label>tea4</label>
    </interactant>
    <organismsDiffer>false</organismsDiffer>
    <experiments>2</experiments>
</comment>
<comment type="similarity">
    <text evidence="7">Belongs to the protein kinase superfamily. STE Ser/Thr protein kinase family. MAP kinase kinase kinase subfamily.</text>
</comment>
<feature type="chain" id="PRO_0000086816" description="MAP kinase kinase kinase win1">
    <location>
        <begin position="1"/>
        <end position="1436"/>
    </location>
</feature>
<feature type="domain" description="Protein kinase" evidence="1">
    <location>
        <begin position="1120"/>
        <end position="1406"/>
    </location>
</feature>
<feature type="region of interest" description="Disordered" evidence="3">
    <location>
        <begin position="56"/>
        <end position="85"/>
    </location>
</feature>
<feature type="region of interest" description="Interaction with tea4">
    <location>
        <begin position="282"/>
        <end position="1123"/>
    </location>
</feature>
<feature type="compositionally biased region" description="Basic and acidic residues" evidence="3">
    <location>
        <begin position="76"/>
        <end position="85"/>
    </location>
</feature>
<feature type="active site" description="Proton acceptor" evidence="1 2">
    <location>
        <position position="1244"/>
    </location>
</feature>
<feature type="binding site" evidence="1">
    <location>
        <begin position="1126"/>
        <end position="1134"/>
    </location>
    <ligand>
        <name>ATP</name>
        <dbReference type="ChEBI" id="CHEBI:30616"/>
    </ligand>
</feature>
<feature type="binding site" evidence="1">
    <location>
        <position position="1149"/>
    </location>
    <ligand>
        <name>ATP</name>
        <dbReference type="ChEBI" id="CHEBI:30616"/>
    </ligand>
</feature>
<feature type="modified residue" description="Phosphoserine" evidence="5">
    <location>
        <position position="224"/>
    </location>
</feature>
<feature type="modified residue" description="Phosphothreonine" evidence="5">
    <location>
        <position position="226"/>
    </location>
</feature>
<sequence length="1436" mass="163273">MENILDPSVVNSHILENGSRRSSINPILDSELRDKTFEKAHRRSLTLLSSFTSSMLELPNNGKEENHRRPSVARSSSDRSKASAKEDLFSEAFRMAEQPPAEALTISTPVDPINIDELDRAYAVSPSDTSNLLHPPTSSSSIPIPIKNAGHSNLDHPIRPSLQSSISSNRIIKSPGIKEDDYMHRGRSISSPMIDVEHINSTAVPSKTKNLPEKPKRSHKLRNSITFAKIEDHPERKSQLRRLSSSLKCFDPEYDYNDPSLSIRRDSSTYYFSNVNETYDEEDSDLDSETSTVNWVQSVLNLPSLLSDDLMANPKNKERFEWQYMLTSVLTGDIVRSEKLRLRKIASSREGRNSDYSDNLWMEIWCWLTHRSVDSYRENLKHLRTGMVDVLLAIMNFHWDESNELTPIVAVDNMLQKLDKYERLYPSRRSILQEHSLYASESFQHKLDVLTAYSNVTHALEIQVNIIRSWVGNEEMDITKNTTNSINNVSQISNGPFVERFYRETGLIRAFEQRIMTNMNSVLSKVCNTIVTYADDLKSYGLPLIADDYMRLLSFPFRLIKEFLNLRLSCAENITSISLFTIDSLLDDLRNTMKVAVHIIQQHTVLIKPFRDDSKFVDENQSLNNILVASLKFYFNLLHRKVRNGCALLHFKETEILEGEWDFLLAVCPHIEHGFQIMSKSLSSLVGEILTNINRYLKDQLQGPDTDDSALITSFYIKVLDCVRIRFRKLMSFTRILKAHLENSCEYVIKENSLSLLIQRLEESNHVLTYTASIEHEGAYVIVPGHLVDSPNILREVLSMTFNKGDNNFESVPPYAVVLAPDSSICWNGHVTDLDIPEVSISIAPNCVRLVTLATANQLSVIEDYFISIVGDTVSLVDSAKANSSKINKQMTKIKRNSLKLALSLLDVIQTIRTRYHGMNCQNLIHYSFSYAIEFAQRLMRLSILDASSIGLIRRKMIQLAISWVGFIYEDCSPTDRNTFRWTVTALEFAMIMTYGSNILMIDKKSFEELKEKVGKCVALLLLHFDVMGTKHAGRSMDQQAGDIPARLVRNNSDRSRLSDNELASFVKEEVMHRIIELESNRRDRLYKSQLIGRVLDDTTKENRLLKELASSKSNITIRWQQGGLIGSGSFGTVYRAVNLDTGDLMAVKEVALHKPRISRPMIKRIKGEMLVLELFDHPNVVSYYGIEVHREKVNIFMELCQGSSLFEFLRYGRIEDELVIQVYVLQLLEGLAYIHSCGVSHQDVKPENILFDHNGIMKFTDFGSAKMSGSASTKIFEQLTQQEEEEFEKDSEFLQHLDQNRGYSLTGTPTYMAPELILGNPSERVGAMDIWSLGCVIVEMATGSPPWPRLDNHFSLMYHIAAHNPPIIPADDQLSPLGQNFLKRCFVSDPNQRATAAELLMDPWVYPLRAGTEFDLMNSSVVESAPSTNGAPLEL</sequence>
<name>WIN1_SCHPO</name>
<dbReference type="EC" id="2.7.11.25"/>
<dbReference type="EMBL" id="AJ223190">
    <property type="protein sequence ID" value="CAA11161.1"/>
    <property type="molecule type" value="Genomic_DNA"/>
</dbReference>
<dbReference type="EMBL" id="CU329670">
    <property type="protein sequence ID" value="CAB60239.2"/>
    <property type="molecule type" value="Genomic_DNA"/>
</dbReference>
<dbReference type="PIR" id="T37556">
    <property type="entry name" value="T37556"/>
</dbReference>
<dbReference type="PIR" id="T50298">
    <property type="entry name" value="T50298"/>
</dbReference>
<dbReference type="PIR" id="T50457">
    <property type="entry name" value="T50457"/>
</dbReference>
<dbReference type="RefSeq" id="NP_594856.2">
    <property type="nucleotide sequence ID" value="NM_001020285.2"/>
</dbReference>
<dbReference type="SMR" id="O74304"/>
<dbReference type="BioGRID" id="279426">
    <property type="interactions" value="11"/>
</dbReference>
<dbReference type="FunCoup" id="O74304">
    <property type="interactions" value="398"/>
</dbReference>
<dbReference type="IntAct" id="O74304">
    <property type="interactions" value="1"/>
</dbReference>
<dbReference type="STRING" id="284812.O74304"/>
<dbReference type="iPTMnet" id="O74304"/>
<dbReference type="PaxDb" id="4896-SPAC1006.09.1"/>
<dbReference type="EnsemblFungi" id="SPAC1006.09.1">
    <property type="protein sequence ID" value="SPAC1006.09.1:pep"/>
    <property type="gene ID" value="SPAC1006.09"/>
</dbReference>
<dbReference type="GeneID" id="2542988"/>
<dbReference type="KEGG" id="spo:2542988"/>
<dbReference type="PomBase" id="SPAC1006.09">
    <property type="gene designation" value="win1"/>
</dbReference>
<dbReference type="VEuPathDB" id="FungiDB:SPAC1006.09"/>
<dbReference type="eggNOG" id="KOG4645">
    <property type="taxonomic scope" value="Eukaryota"/>
</dbReference>
<dbReference type="HOGENOM" id="CLU_001999_2_0_1"/>
<dbReference type="InParanoid" id="O74304"/>
<dbReference type="OMA" id="CQNLIHY"/>
<dbReference type="PhylomeDB" id="O74304"/>
<dbReference type="BRENDA" id="2.7.11.25">
    <property type="organism ID" value="5613"/>
</dbReference>
<dbReference type="PRO" id="PR:O74304"/>
<dbReference type="Proteomes" id="UP000002485">
    <property type="component" value="Chromosome I"/>
</dbReference>
<dbReference type="GO" id="GO:0005737">
    <property type="term" value="C:cytoplasm"/>
    <property type="evidence" value="ECO:0007669"/>
    <property type="project" value="InterPro"/>
</dbReference>
<dbReference type="GO" id="GO:1990315">
    <property type="term" value="C:Mcs4 RR-MAPKKK complex"/>
    <property type="evidence" value="ECO:0000314"/>
    <property type="project" value="PomBase"/>
</dbReference>
<dbReference type="GO" id="GO:0005524">
    <property type="term" value="F:ATP binding"/>
    <property type="evidence" value="ECO:0007669"/>
    <property type="project" value="UniProtKB-KW"/>
</dbReference>
<dbReference type="GO" id="GO:0004709">
    <property type="term" value="F:MAP kinase kinase kinase activity"/>
    <property type="evidence" value="ECO:0000314"/>
    <property type="project" value="PomBase"/>
</dbReference>
<dbReference type="GO" id="GO:0106310">
    <property type="term" value="F:protein serine kinase activity"/>
    <property type="evidence" value="ECO:0007669"/>
    <property type="project" value="RHEA"/>
</dbReference>
<dbReference type="GO" id="GO:0038066">
    <property type="term" value="P:p38MAPK cascade"/>
    <property type="evidence" value="ECO:0000315"/>
    <property type="project" value="PomBase"/>
</dbReference>
<dbReference type="GO" id="GO:0051403">
    <property type="term" value="P:stress-activated MAPK cascade"/>
    <property type="evidence" value="ECO:0007669"/>
    <property type="project" value="InterPro"/>
</dbReference>
<dbReference type="CDD" id="cd06626">
    <property type="entry name" value="STKc_MEKK4"/>
    <property type="match status" value="1"/>
</dbReference>
<dbReference type="FunFam" id="1.10.510.10:FF:001742">
    <property type="entry name" value="MAP kinase kinase kinase win1"/>
    <property type="match status" value="1"/>
</dbReference>
<dbReference type="FunFam" id="3.30.200.20:FF:000387">
    <property type="entry name" value="Serine/threonine-protein kinase STE11"/>
    <property type="match status" value="1"/>
</dbReference>
<dbReference type="Gene3D" id="3.30.200.20">
    <property type="entry name" value="Phosphorylase Kinase, domain 1"/>
    <property type="match status" value="1"/>
</dbReference>
<dbReference type="Gene3D" id="1.10.510.10">
    <property type="entry name" value="Transferase(Phosphotransferase) domain 1"/>
    <property type="match status" value="1"/>
</dbReference>
<dbReference type="InterPro" id="IPR011009">
    <property type="entry name" value="Kinase-like_dom_sf"/>
</dbReference>
<dbReference type="InterPro" id="IPR050538">
    <property type="entry name" value="MAP_kinase_kinase_kinase"/>
</dbReference>
<dbReference type="InterPro" id="IPR017240">
    <property type="entry name" value="MAPKKK_Ssk2/Ssk22"/>
</dbReference>
<dbReference type="InterPro" id="IPR000719">
    <property type="entry name" value="Prot_kinase_dom"/>
</dbReference>
<dbReference type="InterPro" id="IPR017441">
    <property type="entry name" value="Protein_kinase_ATP_BS"/>
</dbReference>
<dbReference type="InterPro" id="IPR008271">
    <property type="entry name" value="Ser/Thr_kinase_AS"/>
</dbReference>
<dbReference type="PANTHER" id="PTHR48016">
    <property type="entry name" value="MAP KINASE KINASE KINASE SSK2-RELATED-RELATED"/>
    <property type="match status" value="1"/>
</dbReference>
<dbReference type="PANTHER" id="PTHR48016:SF52">
    <property type="entry name" value="MAP KINASE KINASE KINASE WIN1"/>
    <property type="match status" value="1"/>
</dbReference>
<dbReference type="Pfam" id="PF00069">
    <property type="entry name" value="Pkinase"/>
    <property type="match status" value="1"/>
</dbReference>
<dbReference type="PIRSF" id="PIRSF037579">
    <property type="entry name" value="MAPKKK_SSK22"/>
    <property type="match status" value="1"/>
</dbReference>
<dbReference type="SMART" id="SM00220">
    <property type="entry name" value="S_TKc"/>
    <property type="match status" value="1"/>
</dbReference>
<dbReference type="SUPFAM" id="SSF56112">
    <property type="entry name" value="Protein kinase-like (PK-like)"/>
    <property type="match status" value="1"/>
</dbReference>
<dbReference type="PROSITE" id="PS00107">
    <property type="entry name" value="PROTEIN_KINASE_ATP"/>
    <property type="match status" value="1"/>
</dbReference>
<dbReference type="PROSITE" id="PS50011">
    <property type="entry name" value="PROTEIN_KINASE_DOM"/>
    <property type="match status" value="1"/>
</dbReference>
<dbReference type="PROSITE" id="PS00108">
    <property type="entry name" value="PROTEIN_KINASE_ST"/>
    <property type="match status" value="1"/>
</dbReference>
<evidence type="ECO:0000255" key="1">
    <source>
        <dbReference type="PROSITE-ProRule" id="PRU00159"/>
    </source>
</evidence>
<evidence type="ECO:0000255" key="2">
    <source>
        <dbReference type="PROSITE-ProRule" id="PRU10027"/>
    </source>
</evidence>
<evidence type="ECO:0000256" key="3">
    <source>
        <dbReference type="SAM" id="MobiDB-lite"/>
    </source>
</evidence>
<evidence type="ECO:0000269" key="4">
    <source>
    </source>
</evidence>
<evidence type="ECO:0000269" key="5">
    <source>
    </source>
</evidence>
<evidence type="ECO:0000269" key="6">
    <source>
    </source>
</evidence>
<evidence type="ECO:0000305" key="7"/>
<reference key="1">
    <citation type="journal article" date="1998" name="Mol. Biol. Cell">
        <title>The fission yeast mitotic regulator win1+ encodes an MAP kinase kinase kinase that phosphorylates and activates Wis1 MAP kinase kinase in response to high osmolarity.</title>
        <authorList>
            <person name="Samejima I."/>
            <person name="Mackie S."/>
            <person name="Warbrick E."/>
            <person name="Weisman R."/>
            <person name="Fantes P.A."/>
        </authorList>
    </citation>
    <scope>NUCLEOTIDE SEQUENCE [GENOMIC DNA]</scope>
    <scope>FUNCTION</scope>
</reference>
<reference key="2">
    <citation type="journal article" date="2002" name="Nature">
        <title>The genome sequence of Schizosaccharomyces pombe.</title>
        <authorList>
            <person name="Wood V."/>
            <person name="Gwilliam R."/>
            <person name="Rajandream M.A."/>
            <person name="Lyne M.H."/>
            <person name="Lyne R."/>
            <person name="Stewart A."/>
            <person name="Sgouros J.G."/>
            <person name="Peat N."/>
            <person name="Hayles J."/>
            <person name="Baker S.G."/>
            <person name="Basham D."/>
            <person name="Bowman S."/>
            <person name="Brooks K."/>
            <person name="Brown D."/>
            <person name="Brown S."/>
            <person name="Chillingworth T."/>
            <person name="Churcher C.M."/>
            <person name="Collins M."/>
            <person name="Connor R."/>
            <person name="Cronin A."/>
            <person name="Davis P."/>
            <person name="Feltwell T."/>
            <person name="Fraser A."/>
            <person name="Gentles S."/>
            <person name="Goble A."/>
            <person name="Hamlin N."/>
            <person name="Harris D.E."/>
            <person name="Hidalgo J."/>
            <person name="Hodgson G."/>
            <person name="Holroyd S."/>
            <person name="Hornsby T."/>
            <person name="Howarth S."/>
            <person name="Huckle E.J."/>
            <person name="Hunt S."/>
            <person name="Jagels K."/>
            <person name="James K.D."/>
            <person name="Jones L."/>
            <person name="Jones M."/>
            <person name="Leather S."/>
            <person name="McDonald S."/>
            <person name="McLean J."/>
            <person name="Mooney P."/>
            <person name="Moule S."/>
            <person name="Mungall K.L."/>
            <person name="Murphy L.D."/>
            <person name="Niblett D."/>
            <person name="Odell C."/>
            <person name="Oliver K."/>
            <person name="O'Neil S."/>
            <person name="Pearson D."/>
            <person name="Quail M.A."/>
            <person name="Rabbinowitsch E."/>
            <person name="Rutherford K.M."/>
            <person name="Rutter S."/>
            <person name="Saunders D."/>
            <person name="Seeger K."/>
            <person name="Sharp S."/>
            <person name="Skelton J."/>
            <person name="Simmonds M.N."/>
            <person name="Squares R."/>
            <person name="Squares S."/>
            <person name="Stevens K."/>
            <person name="Taylor K."/>
            <person name="Taylor R.G."/>
            <person name="Tivey A."/>
            <person name="Walsh S.V."/>
            <person name="Warren T."/>
            <person name="Whitehead S."/>
            <person name="Woodward J.R."/>
            <person name="Volckaert G."/>
            <person name="Aert R."/>
            <person name="Robben J."/>
            <person name="Grymonprez B."/>
            <person name="Weltjens I."/>
            <person name="Vanstreels E."/>
            <person name="Rieger M."/>
            <person name="Schaefer M."/>
            <person name="Mueller-Auer S."/>
            <person name="Gabel C."/>
            <person name="Fuchs M."/>
            <person name="Duesterhoeft A."/>
            <person name="Fritzc C."/>
            <person name="Holzer E."/>
            <person name="Moestl D."/>
            <person name="Hilbert H."/>
            <person name="Borzym K."/>
            <person name="Langer I."/>
            <person name="Beck A."/>
            <person name="Lehrach H."/>
            <person name="Reinhardt R."/>
            <person name="Pohl T.M."/>
            <person name="Eger P."/>
            <person name="Zimmermann W."/>
            <person name="Wedler H."/>
            <person name="Wambutt R."/>
            <person name="Purnelle B."/>
            <person name="Goffeau A."/>
            <person name="Cadieu E."/>
            <person name="Dreano S."/>
            <person name="Gloux S."/>
            <person name="Lelaure V."/>
            <person name="Mottier S."/>
            <person name="Galibert F."/>
            <person name="Aves S.J."/>
            <person name="Xiang Z."/>
            <person name="Hunt C."/>
            <person name="Moore K."/>
            <person name="Hurst S.M."/>
            <person name="Lucas M."/>
            <person name="Rochet M."/>
            <person name="Gaillardin C."/>
            <person name="Tallada V.A."/>
            <person name="Garzon A."/>
            <person name="Thode G."/>
            <person name="Daga R.R."/>
            <person name="Cruzado L."/>
            <person name="Jimenez J."/>
            <person name="Sanchez M."/>
            <person name="del Rey F."/>
            <person name="Benito J."/>
            <person name="Dominguez A."/>
            <person name="Revuelta J.L."/>
            <person name="Moreno S."/>
            <person name="Armstrong J."/>
            <person name="Forsburg S.L."/>
            <person name="Cerutti L."/>
            <person name="Lowe T."/>
            <person name="McCombie W.R."/>
            <person name="Paulsen I."/>
            <person name="Potashkin J."/>
            <person name="Shpakovski G.V."/>
            <person name="Ussery D."/>
            <person name="Barrell B.G."/>
            <person name="Nurse P."/>
        </authorList>
    </citation>
    <scope>NUCLEOTIDE SEQUENCE [LARGE SCALE GENOMIC DNA]</scope>
    <source>
        <strain>972 / ATCC 24843</strain>
    </source>
</reference>
<reference key="3">
    <citation type="journal article" date="2005" name="Curr. Biol.">
        <title>Wsh3/Tea4 is a novel cell-end factor essential for bipolar distribution of Tea1 and protects cell polarity under environmental stress in S. pombe.</title>
        <authorList>
            <person name="Tatebe H."/>
            <person name="Shimada K."/>
            <person name="Uzawa S."/>
            <person name="Morigasaki S."/>
            <person name="Shiozaki K."/>
        </authorList>
    </citation>
    <scope>INTERACTION WITH TEA4</scope>
</reference>
<reference key="4">
    <citation type="journal article" date="2008" name="J. Proteome Res.">
        <title>Phosphoproteome analysis of fission yeast.</title>
        <authorList>
            <person name="Wilson-Grady J.T."/>
            <person name="Villen J."/>
            <person name="Gygi S.P."/>
        </authorList>
    </citation>
    <scope>PHOSPHORYLATION [LARGE SCALE ANALYSIS] AT SER-224 AND THR-226</scope>
    <scope>IDENTIFICATION BY MASS SPECTROMETRY</scope>
</reference>
<protein>
    <recommendedName>
        <fullName>MAP kinase kinase kinase win1</fullName>
        <ecNumber>2.7.11.25</ecNumber>
    </recommendedName>
</protein>
<accession>O74304</accession>
<accession>Q9P7R1</accession>
<accession>Q9UTP1</accession>
<accession>Q9UTR3</accession>
<proteinExistence type="evidence at protein level"/>
<keyword id="KW-0067">ATP-binding</keyword>
<keyword id="KW-0418">Kinase</keyword>
<keyword id="KW-0547">Nucleotide-binding</keyword>
<keyword id="KW-0597">Phosphoprotein</keyword>
<keyword id="KW-1185">Reference proteome</keyword>
<keyword id="KW-0723">Serine/threonine-protein kinase</keyword>
<keyword id="KW-0808">Transferase</keyword>
<gene>
    <name type="primary">win1</name>
    <name type="ORF">SPAC1006.09</name>
    <name type="ORF">SPAC1250.06c</name>
    <name type="ORF">SPAPJ730.01</name>
</gene>